<proteinExistence type="inferred from homology"/>
<protein>
    <recommendedName>
        <fullName evidence="1">Argininosuccinate lyase</fullName>
        <shortName evidence="1">ASAL</shortName>
        <ecNumber evidence="1">4.3.2.1</ecNumber>
    </recommendedName>
    <alternativeName>
        <fullName evidence="1">Arginosuccinase</fullName>
    </alternativeName>
</protein>
<reference key="1">
    <citation type="submission" date="2008-12" db="EMBL/GenBank/DDBJ databases">
        <title>Complete sequence of chromosome of Shewanella baltica OS223.</title>
        <authorList>
            <consortium name="US DOE Joint Genome Institute"/>
            <person name="Lucas S."/>
            <person name="Copeland A."/>
            <person name="Lapidus A."/>
            <person name="Glavina del Rio T."/>
            <person name="Dalin E."/>
            <person name="Tice H."/>
            <person name="Bruce D."/>
            <person name="Goodwin L."/>
            <person name="Pitluck S."/>
            <person name="Chertkov O."/>
            <person name="Meincke L."/>
            <person name="Brettin T."/>
            <person name="Detter J.C."/>
            <person name="Han C."/>
            <person name="Kuske C.R."/>
            <person name="Larimer F."/>
            <person name="Land M."/>
            <person name="Hauser L."/>
            <person name="Kyrpides N."/>
            <person name="Ovchinnikova G."/>
            <person name="Brettar I."/>
            <person name="Rodrigues J."/>
            <person name="Konstantinidis K."/>
            <person name="Tiedje J."/>
        </authorList>
    </citation>
    <scope>NUCLEOTIDE SEQUENCE [LARGE SCALE GENOMIC DNA]</scope>
    <source>
        <strain>OS223</strain>
    </source>
</reference>
<feature type="chain" id="PRO_1000116343" description="Argininosuccinate lyase">
    <location>
        <begin position="1"/>
        <end position="455"/>
    </location>
</feature>
<gene>
    <name evidence="1" type="primary">argH</name>
    <name type="ordered locus">Sbal223_4010</name>
</gene>
<comment type="catalytic activity">
    <reaction evidence="1">
        <text>2-(N(omega)-L-arginino)succinate = fumarate + L-arginine</text>
        <dbReference type="Rhea" id="RHEA:24020"/>
        <dbReference type="ChEBI" id="CHEBI:29806"/>
        <dbReference type="ChEBI" id="CHEBI:32682"/>
        <dbReference type="ChEBI" id="CHEBI:57472"/>
        <dbReference type="EC" id="4.3.2.1"/>
    </reaction>
</comment>
<comment type="pathway">
    <text evidence="1">Amino-acid biosynthesis; L-arginine biosynthesis; L-arginine from L-ornithine and carbamoyl phosphate: step 3/3.</text>
</comment>
<comment type="subcellular location">
    <subcellularLocation>
        <location evidence="1">Cytoplasm</location>
    </subcellularLocation>
</comment>
<comment type="similarity">
    <text evidence="1">Belongs to the lyase 1 family. Argininosuccinate lyase subfamily.</text>
</comment>
<name>ARLY_SHEB2</name>
<accession>B8EBF9</accession>
<organism>
    <name type="scientific">Shewanella baltica (strain OS223)</name>
    <dbReference type="NCBI Taxonomy" id="407976"/>
    <lineage>
        <taxon>Bacteria</taxon>
        <taxon>Pseudomonadati</taxon>
        <taxon>Pseudomonadota</taxon>
        <taxon>Gammaproteobacteria</taxon>
        <taxon>Alteromonadales</taxon>
        <taxon>Shewanellaceae</taxon>
        <taxon>Shewanella</taxon>
    </lineage>
</organism>
<keyword id="KW-0028">Amino-acid biosynthesis</keyword>
<keyword id="KW-0055">Arginine biosynthesis</keyword>
<keyword id="KW-0963">Cytoplasm</keyword>
<keyword id="KW-0456">Lyase</keyword>
<dbReference type="EC" id="4.3.2.1" evidence="1"/>
<dbReference type="EMBL" id="CP001252">
    <property type="protein sequence ID" value="ACK48483.1"/>
    <property type="molecule type" value="Genomic_DNA"/>
</dbReference>
<dbReference type="RefSeq" id="WP_012588800.1">
    <property type="nucleotide sequence ID" value="NC_011663.1"/>
</dbReference>
<dbReference type="SMR" id="B8EBF9"/>
<dbReference type="KEGG" id="sbp:Sbal223_4010"/>
<dbReference type="HOGENOM" id="CLU_027272_2_3_6"/>
<dbReference type="UniPathway" id="UPA00068">
    <property type="reaction ID" value="UER00114"/>
</dbReference>
<dbReference type="Proteomes" id="UP000002507">
    <property type="component" value="Chromosome"/>
</dbReference>
<dbReference type="GO" id="GO:0005829">
    <property type="term" value="C:cytosol"/>
    <property type="evidence" value="ECO:0007669"/>
    <property type="project" value="TreeGrafter"/>
</dbReference>
<dbReference type="GO" id="GO:0004056">
    <property type="term" value="F:argininosuccinate lyase activity"/>
    <property type="evidence" value="ECO:0007669"/>
    <property type="project" value="UniProtKB-UniRule"/>
</dbReference>
<dbReference type="GO" id="GO:0042450">
    <property type="term" value="P:arginine biosynthetic process via ornithine"/>
    <property type="evidence" value="ECO:0007669"/>
    <property type="project" value="InterPro"/>
</dbReference>
<dbReference type="GO" id="GO:0006526">
    <property type="term" value="P:L-arginine biosynthetic process"/>
    <property type="evidence" value="ECO:0007669"/>
    <property type="project" value="UniProtKB-UniRule"/>
</dbReference>
<dbReference type="CDD" id="cd01359">
    <property type="entry name" value="Argininosuccinate_lyase"/>
    <property type="match status" value="1"/>
</dbReference>
<dbReference type="FunFam" id="1.10.40.30:FF:000001">
    <property type="entry name" value="Argininosuccinate lyase"/>
    <property type="match status" value="1"/>
</dbReference>
<dbReference type="FunFam" id="1.20.200.10:FF:000006">
    <property type="entry name" value="Argininosuccinate lyase"/>
    <property type="match status" value="1"/>
</dbReference>
<dbReference type="Gene3D" id="1.10.40.30">
    <property type="entry name" value="Fumarase/aspartase (C-terminal domain)"/>
    <property type="match status" value="1"/>
</dbReference>
<dbReference type="Gene3D" id="1.20.200.10">
    <property type="entry name" value="Fumarase/aspartase (Central domain)"/>
    <property type="match status" value="1"/>
</dbReference>
<dbReference type="Gene3D" id="1.10.275.10">
    <property type="entry name" value="Fumarase/aspartase (N-terminal domain)"/>
    <property type="match status" value="1"/>
</dbReference>
<dbReference type="HAMAP" id="MF_00006">
    <property type="entry name" value="Arg_succ_lyase"/>
    <property type="match status" value="1"/>
</dbReference>
<dbReference type="InterPro" id="IPR029419">
    <property type="entry name" value="Arg_succ_lyase_C"/>
</dbReference>
<dbReference type="InterPro" id="IPR009049">
    <property type="entry name" value="Argininosuccinate_lyase"/>
</dbReference>
<dbReference type="InterPro" id="IPR024083">
    <property type="entry name" value="Fumarase/histidase_N"/>
</dbReference>
<dbReference type="InterPro" id="IPR020557">
    <property type="entry name" value="Fumarate_lyase_CS"/>
</dbReference>
<dbReference type="InterPro" id="IPR000362">
    <property type="entry name" value="Fumarate_lyase_fam"/>
</dbReference>
<dbReference type="InterPro" id="IPR022761">
    <property type="entry name" value="Fumarate_lyase_N"/>
</dbReference>
<dbReference type="InterPro" id="IPR008948">
    <property type="entry name" value="L-Aspartase-like"/>
</dbReference>
<dbReference type="NCBIfam" id="TIGR00838">
    <property type="entry name" value="argH"/>
    <property type="match status" value="1"/>
</dbReference>
<dbReference type="NCBIfam" id="NF008964">
    <property type="entry name" value="PRK12308.1"/>
    <property type="match status" value="1"/>
</dbReference>
<dbReference type="PANTHER" id="PTHR43814">
    <property type="entry name" value="ARGININOSUCCINATE LYASE"/>
    <property type="match status" value="1"/>
</dbReference>
<dbReference type="PANTHER" id="PTHR43814:SF1">
    <property type="entry name" value="ARGININOSUCCINATE LYASE"/>
    <property type="match status" value="1"/>
</dbReference>
<dbReference type="Pfam" id="PF14698">
    <property type="entry name" value="ASL_C2"/>
    <property type="match status" value="1"/>
</dbReference>
<dbReference type="Pfam" id="PF00206">
    <property type="entry name" value="Lyase_1"/>
    <property type="match status" value="1"/>
</dbReference>
<dbReference type="PRINTS" id="PR00145">
    <property type="entry name" value="ARGSUCLYASE"/>
</dbReference>
<dbReference type="PRINTS" id="PR00149">
    <property type="entry name" value="FUMRATELYASE"/>
</dbReference>
<dbReference type="SUPFAM" id="SSF48557">
    <property type="entry name" value="L-aspartase-like"/>
    <property type="match status" value="1"/>
</dbReference>
<dbReference type="PROSITE" id="PS00163">
    <property type="entry name" value="FUMARATE_LYASES"/>
    <property type="match status" value="1"/>
</dbReference>
<sequence>MALWGGRFQGETSALFKLFNDSLPVDYRLFEQDVIGSIAWADAIASVGIISATECRDLKKALNDLLVEVNGDPAIILASGAEDIHSFVESALIAKVGDLGKKLHTGRSRNDQVATDLKLWCQSEGAALLARLQSLHAELLALAEREFDAVMPGYTHLQRAQPVTFGHWCLAYVEMYERDISRLADALTRANTCPLGSGALAGTAYKMDRHALAAALNFAAPTLNSLDSVSDRDHVVELCSTASISMMHLSRMAEDLIFFNSGEANFISLSDEVTSGSSLMPQKKNPDALELIRGKTGRVYGSLVGILTTMKALPLAYNKDMQEDKEGLFDVVDSWAICLDMAALVLSGLKVNRPNALLAAQQGYANSTELADYLVSKGMPFREAHHVVGEVVVAAIAKQIPLEEFSLAELKTFAAIIEDDVYPNLTIEACLAKRDVLGGTALPQIQQAIAAKKAR</sequence>
<evidence type="ECO:0000255" key="1">
    <source>
        <dbReference type="HAMAP-Rule" id="MF_00006"/>
    </source>
</evidence>